<dbReference type="EMBL" id="CP001048">
    <property type="protein sequence ID" value="ACC90918.1"/>
    <property type="molecule type" value="Genomic_DNA"/>
</dbReference>
<dbReference type="RefSeq" id="WP_002208924.1">
    <property type="nucleotide sequence ID" value="NZ_CP009780.1"/>
</dbReference>
<dbReference type="SMR" id="B2K5V9"/>
<dbReference type="GeneID" id="57974473"/>
<dbReference type="KEGG" id="ypb:YPTS_3969"/>
<dbReference type="PATRIC" id="fig|502801.10.peg.3434"/>
<dbReference type="GO" id="GO:0051539">
    <property type="term" value="F:4 iron, 4 sulfur cluster binding"/>
    <property type="evidence" value="ECO:0007669"/>
    <property type="project" value="UniProtKB-UniRule"/>
</dbReference>
<dbReference type="GO" id="GO:0005506">
    <property type="term" value="F:iron ion binding"/>
    <property type="evidence" value="ECO:0007669"/>
    <property type="project" value="InterPro"/>
</dbReference>
<dbReference type="GO" id="GO:0016226">
    <property type="term" value="P:iron-sulfur cluster assembly"/>
    <property type="evidence" value="ECO:0007669"/>
    <property type="project" value="UniProtKB-UniRule"/>
</dbReference>
<dbReference type="GO" id="GO:0051604">
    <property type="term" value="P:protein maturation"/>
    <property type="evidence" value="ECO:0007669"/>
    <property type="project" value="UniProtKB-UniRule"/>
</dbReference>
<dbReference type="Gene3D" id="3.30.300.130">
    <property type="entry name" value="Fe-S cluster assembly (FSCA)"/>
    <property type="match status" value="1"/>
</dbReference>
<dbReference type="Gene3D" id="2.60.300.12">
    <property type="entry name" value="HesB-like domain"/>
    <property type="match status" value="1"/>
</dbReference>
<dbReference type="HAMAP" id="MF_01637">
    <property type="entry name" value="Fe_S_biogen_NfuA"/>
    <property type="match status" value="1"/>
</dbReference>
<dbReference type="InterPro" id="IPR017726">
    <property type="entry name" value="Fe/S_biogenesis_protein_NfuA"/>
</dbReference>
<dbReference type="InterPro" id="IPR000361">
    <property type="entry name" value="FeS_biogenesis"/>
</dbReference>
<dbReference type="InterPro" id="IPR034904">
    <property type="entry name" value="FSCA_dom_sf"/>
</dbReference>
<dbReference type="InterPro" id="IPR035903">
    <property type="entry name" value="HesB-like_dom_sf"/>
</dbReference>
<dbReference type="InterPro" id="IPR001075">
    <property type="entry name" value="NIF_FeS_clus_asmbl_NifU_C"/>
</dbReference>
<dbReference type="NCBIfam" id="NF008392">
    <property type="entry name" value="PRK11190.1"/>
    <property type="match status" value="1"/>
</dbReference>
<dbReference type="NCBIfam" id="TIGR03341">
    <property type="entry name" value="YhgI_GntY"/>
    <property type="match status" value="1"/>
</dbReference>
<dbReference type="PANTHER" id="PTHR11178:SF51">
    <property type="entry name" value="FE_S BIOGENESIS PROTEIN NFUA"/>
    <property type="match status" value="1"/>
</dbReference>
<dbReference type="PANTHER" id="PTHR11178">
    <property type="entry name" value="IRON-SULFUR CLUSTER SCAFFOLD PROTEIN NFU-RELATED"/>
    <property type="match status" value="1"/>
</dbReference>
<dbReference type="Pfam" id="PF01521">
    <property type="entry name" value="Fe-S_biosyn"/>
    <property type="match status" value="1"/>
</dbReference>
<dbReference type="Pfam" id="PF01106">
    <property type="entry name" value="NifU"/>
    <property type="match status" value="1"/>
</dbReference>
<dbReference type="SUPFAM" id="SSF117916">
    <property type="entry name" value="Fe-S cluster assembly (FSCA) domain-like"/>
    <property type="match status" value="1"/>
</dbReference>
<dbReference type="SUPFAM" id="SSF89360">
    <property type="entry name" value="HesB-like domain"/>
    <property type="match status" value="1"/>
</dbReference>
<proteinExistence type="inferred from homology"/>
<gene>
    <name evidence="1" type="primary">nfuA</name>
    <name type="ordered locus">YPTS_3969</name>
</gene>
<organism>
    <name type="scientific">Yersinia pseudotuberculosis serotype IB (strain PB1/+)</name>
    <dbReference type="NCBI Taxonomy" id="502801"/>
    <lineage>
        <taxon>Bacteria</taxon>
        <taxon>Pseudomonadati</taxon>
        <taxon>Pseudomonadota</taxon>
        <taxon>Gammaproteobacteria</taxon>
        <taxon>Enterobacterales</taxon>
        <taxon>Yersiniaceae</taxon>
        <taxon>Yersinia</taxon>
    </lineage>
</organism>
<protein>
    <recommendedName>
        <fullName evidence="1">Fe/S biogenesis protein NfuA</fullName>
    </recommendedName>
</protein>
<feature type="chain" id="PRO_1000186795" description="Fe/S biogenesis protein NfuA">
    <location>
        <begin position="1"/>
        <end position="191"/>
    </location>
</feature>
<feature type="binding site" evidence="1">
    <location>
        <position position="149"/>
    </location>
    <ligand>
        <name>[4Fe-4S] cluster</name>
        <dbReference type="ChEBI" id="CHEBI:49883"/>
    </ligand>
</feature>
<feature type="binding site" evidence="1">
    <location>
        <position position="152"/>
    </location>
    <ligand>
        <name>[4Fe-4S] cluster</name>
        <dbReference type="ChEBI" id="CHEBI:49883"/>
    </ligand>
</feature>
<accession>B2K5V9</accession>
<comment type="function">
    <text evidence="1">Involved in iron-sulfur cluster biogenesis. Binds a 4Fe-4S cluster, can transfer this cluster to apoproteins, and thereby intervenes in the maturation of Fe/S proteins. Could also act as a scaffold/chaperone for damaged Fe/S proteins.</text>
</comment>
<comment type="cofactor">
    <cofactor evidence="1">
        <name>[4Fe-4S] cluster</name>
        <dbReference type="ChEBI" id="CHEBI:49883"/>
    </cofactor>
    <text evidence="1">Binds 1 [4Fe-4S] cluster per subunit. The cluster is presumably bound at the interface of two monomers.</text>
</comment>
<comment type="subunit">
    <text evidence="1">Homodimer.</text>
</comment>
<comment type="similarity">
    <text evidence="1">Belongs to the NfuA family.</text>
</comment>
<name>NFUA_YERPB</name>
<evidence type="ECO:0000255" key="1">
    <source>
        <dbReference type="HAMAP-Rule" id="MF_01637"/>
    </source>
</evidence>
<reference key="1">
    <citation type="submission" date="2008-04" db="EMBL/GenBank/DDBJ databases">
        <title>Complete sequence of Yersinia pseudotuberculosis PB1/+.</title>
        <authorList>
            <person name="Copeland A."/>
            <person name="Lucas S."/>
            <person name="Lapidus A."/>
            <person name="Glavina del Rio T."/>
            <person name="Dalin E."/>
            <person name="Tice H."/>
            <person name="Bruce D."/>
            <person name="Goodwin L."/>
            <person name="Pitluck S."/>
            <person name="Munk A.C."/>
            <person name="Brettin T."/>
            <person name="Detter J.C."/>
            <person name="Han C."/>
            <person name="Tapia R."/>
            <person name="Schmutz J."/>
            <person name="Larimer F."/>
            <person name="Land M."/>
            <person name="Hauser L."/>
            <person name="Challacombe J.F."/>
            <person name="Green L."/>
            <person name="Lindler L.E."/>
            <person name="Nikolich M.P."/>
            <person name="Richardson P."/>
        </authorList>
    </citation>
    <scope>NUCLEOTIDE SEQUENCE [LARGE SCALE GENOMIC DNA]</scope>
    <source>
        <strain>PB1/+</strain>
    </source>
</reference>
<sequence length="191" mass="21004">MITITDAAQSHFAKLLANQEEGTQIRVFVINPGTPTAECGVSYCPPDAVEATDTELKFEQLSAYVDELSVPYLQDAEIDFVTDQLGSQLTLKAPNAKMRKVDDSAPLMERVEYVLQSQINPQLAGHGGRVTLMEITPEGLAILQFGGGCNGCSMVDVTLKEGIEKELLQKFPELKGVRDLTEHQRGEHSYY</sequence>
<keyword id="KW-0004">4Fe-4S</keyword>
<keyword id="KW-0408">Iron</keyword>
<keyword id="KW-0411">Iron-sulfur</keyword>
<keyword id="KW-0479">Metal-binding</keyword>